<keyword id="KW-0025">Alternative splicing</keyword>
<keyword id="KW-0238">DNA-binding</keyword>
<keyword id="KW-0479">Metal-binding</keyword>
<keyword id="KW-0539">Nucleus</keyword>
<keyword id="KW-1185">Reference proteome</keyword>
<keyword id="KW-0862">Zinc</keyword>
<sequence>MPKEQYMCQLCANHGIFNQPKKGHKQKCPYRTCPCSLCALNTKRRALDQIERQLKHTNEPMTGQTATSMASPTPECPLSPTTPKMTPHTPTSGKDTFRNSISSSNMAFTVQLPATITKKELKLLRRDDTPLQNSLERPFPRSIDEAIETIKKEKMSSIFHSAEMLAVGESATSLI</sequence>
<protein>
    <recommendedName>
        <fullName evidence="8">DM domain-containing protein mab-23</fullName>
    </recommendedName>
</protein>
<comment type="function">
    <text evidence="3 4">Probable transcription factor that plays a role in the development of the dopaminergic neurons of the male-specific genital sensilla (simple sense organs) known as rays, by negatively regulating the activity of the transcription factor ast-1 (PubMed:12231628, PubMed:22069471). Involved in male mating behavior, probably as a result of a role in the differentiation of male-specific diagonal muscles (PubMed:12231628, PubMed:22069471). Required for development of the male proctodeum (PubMed:12231628). May be dispensable in hermaphrodites (PubMed:12231628).</text>
</comment>
<comment type="subcellular location">
    <subcellularLocation>
        <location evidence="1">Nucleus</location>
    </subcellularLocation>
</comment>
<comment type="alternative products">
    <event type="alternative splicing"/>
    <isoform>
        <id>G5ECK3-1</id>
        <name evidence="8">a</name>
        <sequence type="displayed"/>
    </isoform>
    <isoform>
        <id>G5ECK3-2</id>
        <name evidence="9">b</name>
        <sequence type="described" ref="VSP_061377"/>
    </isoform>
</comment>
<comment type="tissue specificity">
    <text evidence="3">Expressed in a limited number of non-sex-specific tissues in males, including 6-8 unidentified neurons of the head, ventral body wall muscle, and the PHCL/R neurons.</text>
</comment>
<comment type="developmental stage">
    <text evidence="3">In males, expressed in several sex-specific cell types during larval development and in the adult, including the A-type ray sensory neurons, ventral male-specific muscles, and unidentified neurons of the male posterior ventral nerve cord (PubMed:12231628). Transiently expressed during larval development in the hindgut (PubMed:12231628).</text>
</comment>
<comment type="disruption phenotype">
    <text evidence="3">RNAi-mediated knockdown causes defects in patterning of the dopaminergic neurons of the male-specific genital sensilla (simple sense organs) known as rays (PubMed:12231628). Males are unable to sire progeny due to abnormal tail and gonad morphology, whereas hermaphrodites have no obvious phenotypic defects (PubMed:12231628).</text>
</comment>
<organism evidence="7">
    <name type="scientific">Caenorhabditis elegans</name>
    <dbReference type="NCBI Taxonomy" id="6239"/>
    <lineage>
        <taxon>Eukaryota</taxon>
        <taxon>Metazoa</taxon>
        <taxon>Ecdysozoa</taxon>
        <taxon>Nematoda</taxon>
        <taxon>Chromadorea</taxon>
        <taxon>Rhabditida</taxon>
        <taxon>Rhabditina</taxon>
        <taxon>Rhabditomorpha</taxon>
        <taxon>Rhabditoidea</taxon>
        <taxon>Rhabditidae</taxon>
        <taxon>Peloderinae</taxon>
        <taxon>Caenorhabditis</taxon>
    </lineage>
</organism>
<gene>
    <name evidence="8" type="primary">mab-23</name>
    <name evidence="8" type="ORF">C32C4.5</name>
</gene>
<proteinExistence type="evidence at protein level"/>
<feature type="chain" id="PRO_0000454716" description="DM domain-containing protein mab-23">
    <location>
        <begin position="1"/>
        <end position="175"/>
    </location>
</feature>
<feature type="DNA-binding region" description="DM" evidence="1">
    <location>
        <begin position="8"/>
        <end position="56"/>
    </location>
</feature>
<feature type="region of interest" description="Disordered" evidence="2">
    <location>
        <begin position="58"/>
        <end position="93"/>
    </location>
</feature>
<feature type="compositionally biased region" description="Polar residues" evidence="2">
    <location>
        <begin position="59"/>
        <end position="71"/>
    </location>
</feature>
<feature type="compositionally biased region" description="Low complexity" evidence="2">
    <location>
        <begin position="81"/>
        <end position="91"/>
    </location>
</feature>
<feature type="splice variant" id="VSP_061377" description="In isoform b." evidence="5">
    <location>
        <begin position="1"/>
        <end position="105"/>
    </location>
</feature>
<feature type="mutagenesis site" description="In e2518; defects in patterning of the dopaminergic neurons of the male-specific genital sensilla (simple sense organs) known as rays. Males abnormally express dopamine transporter cat-2 and synthesize dopamine in the A-type neurons of the rays. Males are unable to sire progeny due to abnormal tail and gonad morphology, whereas hermaphrodites have no obvious phenotypic defects." evidence="3">
    <original>C</original>
    <variation>F</variation>
    <location>
        <position position="38"/>
    </location>
</feature>
<name>MAB23_CAEEL</name>
<reference evidence="6" key="1">
    <citation type="journal article" date="2002" name="Genes Dev.">
        <title>Regulation of sex-specific differentiation and mating behavior in C. elegans by a new member of the DM domain transcription factor family.</title>
        <authorList>
            <person name="Lints R."/>
            <person name="Emmons S.W."/>
        </authorList>
    </citation>
    <scope>NUCLEOTIDE SEQUENCE [MRNA]</scope>
    <scope>FUNCTION</scope>
    <scope>TISSUE SPECIFICITY</scope>
    <scope>DEVELOPMENTAL STAGE</scope>
    <scope>DISRUPTION PHENOTYPE</scope>
    <scope>MUTAGENESIS OF CYS-38</scope>
    <source>
        <strain evidence="6">Bristol N2</strain>
    </source>
</reference>
<reference evidence="7" key="2">
    <citation type="journal article" date="1998" name="Science">
        <title>Genome sequence of the nematode C. elegans: a platform for investigating biology.</title>
        <authorList>
            <consortium name="The C. elegans sequencing consortium"/>
        </authorList>
    </citation>
    <scope>NUCLEOTIDE SEQUENCE [LARGE SCALE GENOMIC DNA]</scope>
    <source>
        <strain evidence="7">Bristol N2</strain>
    </source>
</reference>
<reference evidence="5" key="3">
    <citation type="journal article" date="2011" name="PLoS ONE">
        <title>Multiple doublesex-related genes specify critical cell fates in a C. elegans male neural circuit.</title>
        <authorList>
            <person name="Siehr M.S."/>
            <person name="Koo P.K."/>
            <person name="Sherlekar A.L."/>
            <person name="Bian X."/>
            <person name="Bunkers M.R."/>
            <person name="Miller R.M."/>
            <person name="Portman D.S."/>
            <person name="Lints R."/>
        </authorList>
    </citation>
    <scope>FUNCTION</scope>
</reference>
<accession>G5ECK3</accession>
<accession>Q1NZ22</accession>
<evidence type="ECO:0000255" key="1">
    <source>
        <dbReference type="PROSITE-ProRule" id="PRU00070"/>
    </source>
</evidence>
<evidence type="ECO:0000256" key="2">
    <source>
        <dbReference type="SAM" id="MobiDB-lite"/>
    </source>
</evidence>
<evidence type="ECO:0000269" key="3">
    <source>
    </source>
</evidence>
<evidence type="ECO:0000269" key="4">
    <source>
    </source>
</evidence>
<evidence type="ECO:0000305" key="5"/>
<evidence type="ECO:0000312" key="6">
    <source>
        <dbReference type="EMBL" id="AAN17799.1"/>
    </source>
</evidence>
<evidence type="ECO:0000312" key="7">
    <source>
        <dbReference type="Proteomes" id="UP000001940"/>
    </source>
</evidence>
<evidence type="ECO:0000312" key="8">
    <source>
        <dbReference type="WormBase" id="C32C4.5a"/>
    </source>
</evidence>
<evidence type="ECO:0000312" key="9">
    <source>
        <dbReference type="WormBase" id="C32C4.5b"/>
    </source>
</evidence>
<dbReference type="EMBL" id="AF535153">
    <property type="protein sequence ID" value="AAN17799.1"/>
    <property type="molecule type" value="mRNA"/>
</dbReference>
<dbReference type="EMBL" id="BX284605">
    <property type="protein sequence ID" value="CAD44103.1"/>
    <property type="molecule type" value="Genomic_DNA"/>
</dbReference>
<dbReference type="EMBL" id="BX284605">
    <property type="protein sequence ID" value="CAJ90497.1"/>
    <property type="molecule type" value="Genomic_DNA"/>
</dbReference>
<dbReference type="RefSeq" id="NP_001041089.1">
    <molecule id="G5ECK3-1"/>
    <property type="nucleotide sequence ID" value="NM_001047624.2"/>
</dbReference>
<dbReference type="RefSeq" id="NP_001041090.1">
    <molecule id="G5ECK3-2"/>
    <property type="nucleotide sequence ID" value="NM_001047625.1"/>
</dbReference>
<dbReference type="FunCoup" id="G5ECK3">
    <property type="interactions" value="235"/>
</dbReference>
<dbReference type="IntAct" id="G5ECK3">
    <property type="interactions" value="1"/>
</dbReference>
<dbReference type="STRING" id="6239.C32C4.5a.1"/>
<dbReference type="PaxDb" id="6239-C32C4.5a"/>
<dbReference type="EnsemblMetazoa" id="C32C4.5a.1">
    <molecule id="G5ECK3-1"/>
    <property type="protein sequence ID" value="C32C4.5a.1"/>
    <property type="gene ID" value="WBGene00003114"/>
</dbReference>
<dbReference type="EnsemblMetazoa" id="C32C4.5b.1">
    <molecule id="G5ECK3-2"/>
    <property type="protein sequence ID" value="C32C4.5b.1"/>
    <property type="gene ID" value="WBGene00003114"/>
</dbReference>
<dbReference type="GeneID" id="266926"/>
<dbReference type="KEGG" id="cel:CELE_C32C4.5"/>
<dbReference type="UCSC" id="C32C4.5a">
    <property type="organism name" value="c. elegans"/>
</dbReference>
<dbReference type="AGR" id="WB:WBGene00003114"/>
<dbReference type="CTD" id="266926"/>
<dbReference type="WormBase" id="C32C4.5a">
    <molecule id="G5ECK3-1"/>
    <property type="protein sequence ID" value="CE31427"/>
    <property type="gene ID" value="WBGene00003114"/>
    <property type="gene designation" value="mab-23"/>
</dbReference>
<dbReference type="WormBase" id="C32C4.5b">
    <molecule id="G5ECK3-2"/>
    <property type="protein sequence ID" value="CE40025"/>
    <property type="gene ID" value="WBGene00003114"/>
    <property type="gene designation" value="mab-23"/>
</dbReference>
<dbReference type="eggNOG" id="ENOG502STJF">
    <property type="taxonomic scope" value="Eukaryota"/>
</dbReference>
<dbReference type="HOGENOM" id="CLU_106428_0_0_1"/>
<dbReference type="InParanoid" id="G5ECK3"/>
<dbReference type="OMA" id="IFHSAEM"/>
<dbReference type="OrthoDB" id="5807583at2759"/>
<dbReference type="PRO" id="PR:G5ECK3"/>
<dbReference type="Proteomes" id="UP000001940">
    <property type="component" value="Chromosome V"/>
</dbReference>
<dbReference type="Bgee" id="WBGene00003114">
    <property type="expression patterns" value="Expressed in larva and 1 other cell type or tissue"/>
</dbReference>
<dbReference type="ExpressionAtlas" id="G5ECK3">
    <property type="expression patterns" value="baseline"/>
</dbReference>
<dbReference type="GO" id="GO:0005634">
    <property type="term" value="C:nucleus"/>
    <property type="evidence" value="ECO:0000314"/>
    <property type="project" value="WormBase"/>
</dbReference>
<dbReference type="GO" id="GO:0046872">
    <property type="term" value="F:metal ion binding"/>
    <property type="evidence" value="ECO:0007669"/>
    <property type="project" value="UniProtKB-KW"/>
</dbReference>
<dbReference type="GO" id="GO:0043565">
    <property type="term" value="F:sequence-specific DNA binding"/>
    <property type="evidence" value="ECO:0007669"/>
    <property type="project" value="InterPro"/>
</dbReference>
<dbReference type="GO" id="GO:0010629">
    <property type="term" value="P:negative regulation of gene expression"/>
    <property type="evidence" value="ECO:0000315"/>
    <property type="project" value="UniProtKB"/>
</dbReference>
<dbReference type="GO" id="GO:0048664">
    <property type="term" value="P:neuron fate determination"/>
    <property type="evidence" value="ECO:0000315"/>
    <property type="project" value="UniProtKB"/>
</dbReference>
<dbReference type="GO" id="GO:0006355">
    <property type="term" value="P:regulation of DNA-templated transcription"/>
    <property type="evidence" value="ECO:0007669"/>
    <property type="project" value="InterPro"/>
</dbReference>
<dbReference type="GO" id="GO:1902435">
    <property type="term" value="P:regulation of male mating behavior"/>
    <property type="evidence" value="ECO:0000315"/>
    <property type="project" value="UniProtKB"/>
</dbReference>
<dbReference type="GO" id="GO:0110037">
    <property type="term" value="P:regulation of nematode male tail tip morphogenesis"/>
    <property type="evidence" value="ECO:0000315"/>
    <property type="project" value="UniProtKB"/>
</dbReference>
<dbReference type="Gene3D" id="4.10.1040.10">
    <property type="entry name" value="DM DNA-binding domain"/>
    <property type="match status" value="1"/>
</dbReference>
<dbReference type="InterPro" id="IPR001275">
    <property type="entry name" value="DM_DNA-bd"/>
</dbReference>
<dbReference type="InterPro" id="IPR036407">
    <property type="entry name" value="DM_DNA-bd_sf"/>
</dbReference>
<dbReference type="Pfam" id="PF00751">
    <property type="entry name" value="DM"/>
    <property type="match status" value="1"/>
</dbReference>
<dbReference type="SMART" id="SM00301">
    <property type="entry name" value="DM"/>
    <property type="match status" value="1"/>
</dbReference>
<dbReference type="SUPFAM" id="SSF82927">
    <property type="entry name" value="Cysteine-rich DNA binding domain, (DM domain)"/>
    <property type="match status" value="1"/>
</dbReference>
<dbReference type="PROSITE" id="PS50809">
    <property type="entry name" value="DM_2"/>
    <property type="match status" value="1"/>
</dbReference>